<reference key="1">
    <citation type="journal article" date="1989" name="FEBS Lett.">
        <title>Molecular cloning and sequence analysis of cDNA encoding rat adrenal cytochrome P-450(11)beta.</title>
        <authorList>
            <person name="Nonaka Y."/>
            <person name="Matsukawa N."/>
            <person name="Morohashi K."/>
            <person name="Omura T."/>
            <person name="Ogihara T."/>
            <person name="Teraoka H."/>
            <person name="Okamoto M."/>
        </authorList>
    </citation>
    <scope>NUCLEOTIDE SEQUENCE [MRNA]</scope>
    <source>
        <strain>Sprague-Dawley</strain>
    </source>
</reference>
<reference key="2">
    <citation type="journal article" date="1993" name="J. Biol. Chem.">
        <title>Dahl's salt-resistant normotensive rat has mutations in cytochrome P450(11 beta), but the salt-sensitive hypertensive rat does not.</title>
        <authorList>
            <person name="Matsukawa N."/>
            <person name="Nonaka Y."/>
            <person name="Higaki J."/>
            <person name="Nagano M."/>
            <person name="Mikami H."/>
            <person name="Ogihara T."/>
            <person name="Okamoto M."/>
        </authorList>
    </citation>
    <scope>NUCLEOTIDE SEQUENCE [MRNA]</scope>
    <source>
        <strain>Dahl salt-resistant</strain>
        <tissue>Adrenal gland</tissue>
    </source>
</reference>
<reference key="3">
    <citation type="journal article" date="1993" name="J. Biol. Chem.">
        <title>Isolation and characterization of rat CYP11B genes involved in late steps of mineralo- and glucocorticoid syntheses.</title>
        <authorList>
            <person name="Mukai K."/>
            <person name="Imai M."/>
            <person name="Shimada H."/>
            <person name="Ishimura Y."/>
        </authorList>
    </citation>
    <scope>NUCLEOTIDE SEQUENCE [GENOMIC DNA]</scope>
    <source>
        <strain>Sprague-Dawley</strain>
        <tissue>Testis</tissue>
    </source>
</reference>
<reference key="4">
    <citation type="journal article" date="1993" name="J. Biochem.">
        <title>Three forms of rat CYP11B genes: 11 beta-hydroxylase gene, aldosterone synthase gene, and a novel gene.</title>
        <authorList>
            <person name="Nomura M."/>
            <person name="Morohashi K."/>
            <person name="Kirita S."/>
            <person name="Nonaka Y."/>
            <person name="Okamoto M."/>
            <person name="Nawata H."/>
            <person name="Omura T."/>
        </authorList>
    </citation>
    <scope>NUCLEOTIDE SEQUENCE</scope>
</reference>
<reference key="5">
    <citation type="journal article" date="1995" name="J. Steroid Biochem. Mol. Biol.">
        <title>Cytochrome P450(11 beta): structure-function relationship of the enzyme and its involvement in blood pressure regulation.</title>
        <authorList>
            <person name="Okamoto M."/>
            <person name="Nonaka Y."/>
            <person name="Ohta M."/>
            <person name="Takemori H."/>
            <person name="Halder S.K."/>
            <person name="Zhi-Nong W."/>
            <person name="Sun T."/>
            <person name="Hatano O."/>
            <person name="Takakusa A."/>
            <person name="Murakami T."/>
        </authorList>
    </citation>
    <scope>NUCLEOTIDE SEQUENCE</scope>
    <source>
        <strain>Dahl salt-resistant</strain>
    </source>
</reference>
<reference key="6">
    <citation type="journal article" date="1989" name="J. Biol. Chem.">
        <title>Isolation of aldosterone synthase cytochrome P-450 from zona glomerulosa mitochondria of rat adrenal cortex.</title>
        <authorList>
            <person name="Ogishima T."/>
            <person name="Mitani F."/>
            <person name="Ishimura Y."/>
        </authorList>
    </citation>
    <scope>PROTEIN SEQUENCE OF 25-44</scope>
    <scope>FUNCTION</scope>
    <scope>CATALYTIC ACTIVITY</scope>
    <scope>TISSUE SPECIFICITY</scope>
    <source>
        <tissue>Adrenal cortex</tissue>
    </source>
</reference>
<reference key="7">
    <citation type="journal article" date="1991" name="Eur. J. Biochem.">
        <title>Functional expression of the cDNAs encoding rat 11 beta-hydroxylase [cytochrome P450(11 beta)] and aldosterone synthase [cytochrome P450(11 beta, aldo)].</title>
        <authorList>
            <person name="Nonaka Y."/>
            <person name="Okamoto M."/>
        </authorList>
    </citation>
    <scope>FUNCTION</scope>
    <scope>CATALYTIC ACTIVITY</scope>
</reference>
<reference key="8">
    <citation type="journal article" date="1992" name="J. Steroid Biochem. Mol. Biol.">
        <title>Molecular biology of rat steroid 11 beta-hydroxylase [P450(11 beta)] and aldosterone synthase [P450(11 beta, aldo)].</title>
        <authorList>
            <person name="Okamoto M."/>
            <person name="Nonaka Y."/>
        </authorList>
    </citation>
    <scope>FUNCTION</scope>
    <scope>CATALYTIC ACTIVITY</scope>
</reference>
<name>C11B1_RAT</name>
<feature type="transit peptide" description="Mitochondrion" evidence="6">
    <location>
        <begin position="1"/>
        <end position="24"/>
    </location>
</feature>
<feature type="chain" id="PRO_0000003603" description="Cytochrome P450 11B1, mitochondrial">
    <location>
        <begin position="25"/>
        <end position="499"/>
    </location>
</feature>
<feature type="binding site" description="axial binding residue" evidence="3">
    <location>
        <position position="446"/>
    </location>
    <ligand>
        <name>heme</name>
        <dbReference type="ChEBI" id="CHEBI:30413"/>
    </ligand>
    <ligandPart>
        <name>Fe</name>
        <dbReference type="ChEBI" id="CHEBI:18248"/>
    </ligandPart>
</feature>
<feature type="sequence variant" description="In strain: Dahl salt-resistant.">
    <original>R</original>
    <variation>C</variation>
    <location>
        <position position="127"/>
    </location>
</feature>
<feature type="sequence variant" description="In strain: Dahl salt-resistant.">
    <original>V</original>
    <variation>A</variation>
    <location>
        <position position="351"/>
    </location>
</feature>
<feature type="sequence variant" description="In strain: Dahl salt-resistant.">
    <original>V</original>
    <variation>L</variation>
    <location>
        <position position="381"/>
    </location>
</feature>
<feature type="sequence variant" description="In strain: Dahl salt-resistant.">
    <original>I</original>
    <variation>L</variation>
    <location>
        <position position="384"/>
    </location>
</feature>
<feature type="sequence variant" description="In strain: Dahl salt-resistant.">
    <original>V</original>
    <variation>M</variation>
    <location>
        <position position="443"/>
    </location>
</feature>
<accession>P15393</accession>
<accession>Q64655</accession>
<evidence type="ECO:0000250" key="1">
    <source>
        <dbReference type="UniProtKB" id="P14137"/>
    </source>
</evidence>
<evidence type="ECO:0000250" key="2">
    <source>
        <dbReference type="UniProtKB" id="P15538"/>
    </source>
</evidence>
<evidence type="ECO:0000250" key="3">
    <source>
        <dbReference type="UniProtKB" id="P19099"/>
    </source>
</evidence>
<evidence type="ECO:0000269" key="4">
    <source>
    </source>
</evidence>
<evidence type="ECO:0000269" key="5">
    <source>
    </source>
</evidence>
<evidence type="ECO:0000269" key="6">
    <source>
    </source>
</evidence>
<evidence type="ECO:0000305" key="7"/>
<evidence type="ECO:0000305" key="8">
    <source>
    </source>
</evidence>
<evidence type="ECO:0000305" key="9">
    <source>
    </source>
</evidence>
<evidence type="ECO:0000305" key="10">
    <source>
    </source>
</evidence>
<gene>
    <name type="primary">Cyp11b1</name>
    <name type="synonym">Cyp11b-1</name>
</gene>
<comment type="function">
    <text evidence="2 4 5 6">A cytochrome P450 monooxygenase involved in the biosynthesis of adrenal corticoids (PubMed:1562515, PubMed:1765101, PubMed:2738055). Catalyzes a variety of reactions that are essential for many species, including detoxification, defense, and the formation of endogenous chemicals like steroid hormones (By similarity). Steroid 11beta, 18- and 19-hydroxylase with preferred regioselectivity at 11beta, then 18, and lastly 19 (PubMed:1562515, PubMed:1765101). Catalyzes the hydroxylation of 11-deoxycortisol and 11-deoxycorticosterone (21-hydroxyprogesterone) at 11beta position, yielding cortisol or corticosterone, respectively, but cannot produce aldosterone (PubMed:1562515, PubMed:1765101, PubMed:2738055). Mechanistically, uses molecular oxygen inserting one oxygen atom into a substrate for hydroxylation and reducing the second into a water molecule. Two electrons are provided by NADPH via a two-protein mitochondrial transfer system comprising flavoprotein FDXR (adrenodoxin/ferredoxin reductase) and nonheme iron-sulfur protein FDX1 or FDX2 (adrenodoxin/ferredoxin). Due to its lack of 18-oxidation activity, it is incapable of generating aldosterone. Could also be involved in the androgen metabolic pathway (By similarity).</text>
</comment>
<comment type="catalytic activity">
    <reaction evidence="4 5 6">
        <text>a steroid + 2 reduced [adrenodoxin] + O2 + 2 H(+) = an 11beta-hydroxysteroid + 2 oxidized [adrenodoxin] + H2O</text>
        <dbReference type="Rhea" id="RHEA:15629"/>
        <dbReference type="Rhea" id="RHEA-COMP:9998"/>
        <dbReference type="Rhea" id="RHEA-COMP:9999"/>
        <dbReference type="ChEBI" id="CHEBI:15377"/>
        <dbReference type="ChEBI" id="CHEBI:15378"/>
        <dbReference type="ChEBI" id="CHEBI:15379"/>
        <dbReference type="ChEBI" id="CHEBI:33737"/>
        <dbReference type="ChEBI" id="CHEBI:33738"/>
        <dbReference type="ChEBI" id="CHEBI:35341"/>
        <dbReference type="ChEBI" id="CHEBI:35346"/>
        <dbReference type="EC" id="1.14.15.4"/>
    </reaction>
    <physiologicalReaction direction="left-to-right" evidence="8 9 10">
        <dbReference type="Rhea" id="RHEA:15630"/>
    </physiologicalReaction>
</comment>
<comment type="catalytic activity">
    <reaction evidence="4 5 6">
        <text>21-hydroxyprogesterone + 2 reduced [adrenodoxin] + O2 + 2 H(+) = corticosterone + 2 oxidized [adrenodoxin] + H2O</text>
        <dbReference type="Rhea" id="RHEA:46104"/>
        <dbReference type="Rhea" id="RHEA-COMP:9998"/>
        <dbReference type="Rhea" id="RHEA-COMP:9999"/>
        <dbReference type="ChEBI" id="CHEBI:15377"/>
        <dbReference type="ChEBI" id="CHEBI:15378"/>
        <dbReference type="ChEBI" id="CHEBI:15379"/>
        <dbReference type="ChEBI" id="CHEBI:16827"/>
        <dbReference type="ChEBI" id="CHEBI:16973"/>
        <dbReference type="ChEBI" id="CHEBI:33737"/>
        <dbReference type="ChEBI" id="CHEBI:33738"/>
    </reaction>
    <physiologicalReaction direction="left-to-right" evidence="8 9 10">
        <dbReference type="Rhea" id="RHEA:46105"/>
    </physiologicalReaction>
</comment>
<comment type="catalytic activity">
    <reaction evidence="4 6">
        <text>21-hydroxyprogesterone + 2 reduced [adrenodoxin] + O2 + 2 H(+) = 18-hydroxy-11-deoxycorticosterone + 2 oxidized [adrenodoxin] + H2O</text>
        <dbReference type="Rhea" id="RHEA:76151"/>
        <dbReference type="Rhea" id="RHEA-COMP:9998"/>
        <dbReference type="Rhea" id="RHEA-COMP:9999"/>
        <dbReference type="ChEBI" id="CHEBI:15377"/>
        <dbReference type="ChEBI" id="CHEBI:15378"/>
        <dbReference type="ChEBI" id="CHEBI:15379"/>
        <dbReference type="ChEBI" id="CHEBI:16973"/>
        <dbReference type="ChEBI" id="CHEBI:33737"/>
        <dbReference type="ChEBI" id="CHEBI:33738"/>
        <dbReference type="ChEBI" id="CHEBI:195166"/>
    </reaction>
    <physiologicalReaction direction="left-to-right" evidence="8 10">
        <dbReference type="Rhea" id="RHEA:76152"/>
    </physiologicalReaction>
</comment>
<comment type="catalytic activity">
    <reaction evidence="4 5">
        <text>21-hydroxyprogesterone + 2 reduced [adrenodoxin] + O2 + 2 H(+) = 19-hydroxy-11-deoxycorticosterone + 2 oxidized [adrenodoxin] + H2O</text>
        <dbReference type="Rhea" id="RHEA:76155"/>
        <dbReference type="Rhea" id="RHEA-COMP:9998"/>
        <dbReference type="Rhea" id="RHEA-COMP:9999"/>
        <dbReference type="ChEBI" id="CHEBI:15377"/>
        <dbReference type="ChEBI" id="CHEBI:15378"/>
        <dbReference type="ChEBI" id="CHEBI:15379"/>
        <dbReference type="ChEBI" id="CHEBI:16973"/>
        <dbReference type="ChEBI" id="CHEBI:33737"/>
        <dbReference type="ChEBI" id="CHEBI:33738"/>
        <dbReference type="ChEBI" id="CHEBI:195167"/>
    </reaction>
    <physiologicalReaction direction="left-to-right" evidence="8 9">
        <dbReference type="Rhea" id="RHEA:76156"/>
    </physiologicalReaction>
</comment>
<comment type="catalytic activity">
    <reaction evidence="4">
        <text>11-deoxycortisol + 2 reduced [adrenodoxin] + O2 + 2 H(+) = cortisol + 2 oxidized [adrenodoxin] + H2O</text>
        <dbReference type="Rhea" id="RHEA:46100"/>
        <dbReference type="Rhea" id="RHEA-COMP:9998"/>
        <dbReference type="Rhea" id="RHEA-COMP:9999"/>
        <dbReference type="ChEBI" id="CHEBI:15377"/>
        <dbReference type="ChEBI" id="CHEBI:15378"/>
        <dbReference type="ChEBI" id="CHEBI:15379"/>
        <dbReference type="ChEBI" id="CHEBI:17650"/>
        <dbReference type="ChEBI" id="CHEBI:28324"/>
        <dbReference type="ChEBI" id="CHEBI:33737"/>
        <dbReference type="ChEBI" id="CHEBI:33738"/>
    </reaction>
    <physiologicalReaction direction="left-to-right" evidence="8">
        <dbReference type="Rhea" id="RHEA:46101"/>
    </physiologicalReaction>
</comment>
<comment type="catalytic activity">
    <reaction evidence="8">
        <text>cortisol + 2 reduced [adrenodoxin] + O2 + 2 H(+) = 18-hydroxycortisol + 2 oxidized [adrenodoxin] + H2O</text>
        <dbReference type="Rhea" id="RHEA:76019"/>
        <dbReference type="Rhea" id="RHEA-COMP:9998"/>
        <dbReference type="Rhea" id="RHEA-COMP:9999"/>
        <dbReference type="ChEBI" id="CHEBI:15377"/>
        <dbReference type="ChEBI" id="CHEBI:15378"/>
        <dbReference type="ChEBI" id="CHEBI:15379"/>
        <dbReference type="ChEBI" id="CHEBI:17650"/>
        <dbReference type="ChEBI" id="CHEBI:33737"/>
        <dbReference type="ChEBI" id="CHEBI:33738"/>
        <dbReference type="ChEBI" id="CHEBI:89455"/>
    </reaction>
    <physiologicalReaction direction="left-to-right" evidence="8">
        <dbReference type="Rhea" id="RHEA:76020"/>
    </physiologicalReaction>
</comment>
<comment type="catalytic activity">
    <reaction evidence="4">
        <text>11-deoxycortisol + 2 reduced [adrenodoxin] + O2 + 2 H(+) = 18-hydroxy-11-deoxycortisol + 2 oxidized [adrenodoxin] + H2O</text>
        <dbReference type="Rhea" id="RHEA:76163"/>
        <dbReference type="Rhea" id="RHEA-COMP:9998"/>
        <dbReference type="Rhea" id="RHEA-COMP:9999"/>
        <dbReference type="ChEBI" id="CHEBI:15377"/>
        <dbReference type="ChEBI" id="CHEBI:15378"/>
        <dbReference type="ChEBI" id="CHEBI:15379"/>
        <dbReference type="ChEBI" id="CHEBI:28324"/>
        <dbReference type="ChEBI" id="CHEBI:33737"/>
        <dbReference type="ChEBI" id="CHEBI:33738"/>
        <dbReference type="ChEBI" id="CHEBI:195179"/>
    </reaction>
    <physiologicalReaction direction="left-to-right" evidence="8">
        <dbReference type="Rhea" id="RHEA:76164"/>
    </physiologicalReaction>
</comment>
<comment type="cofactor">
    <cofactor evidence="3">
        <name>heme</name>
        <dbReference type="ChEBI" id="CHEBI:30413"/>
    </cofactor>
</comment>
<comment type="pathway">
    <text evidence="2">Steroid biosynthesis; glucocorticoid biosynthesis.</text>
</comment>
<comment type="pathway">
    <text evidence="2">Steroid hormone biosynthesis.</text>
</comment>
<comment type="subcellular location">
    <subcellularLocation>
        <location evidence="1">Mitochondrion inner membrane</location>
        <topology evidence="1">Peripheral membrane protein</topology>
    </subcellularLocation>
</comment>
<comment type="tissue specificity">
    <text evidence="6">Adrenal zona fasciculata/reticularis.</text>
</comment>
<comment type="similarity">
    <text evidence="7">Belongs to the cytochrome P450 family.</text>
</comment>
<dbReference type="EC" id="1.14.15.4" evidence="2"/>
<dbReference type="EMBL" id="D11354">
    <property type="protein sequence ID" value="BAA01957.1"/>
    <property type="molecule type" value="mRNA"/>
</dbReference>
<dbReference type="EMBL" id="D14091">
    <property type="protein sequence ID" value="BAA03171.1"/>
    <property type="molecule type" value="Genomic_DNA"/>
</dbReference>
<dbReference type="EMBL" id="X15431">
    <property type="protein sequence ID" value="CAA33472.1"/>
    <property type="molecule type" value="mRNA"/>
</dbReference>
<dbReference type="EMBL" id="D10107">
    <property type="protein sequence ID" value="BAA00988.1"/>
    <property type="molecule type" value="mRNA"/>
</dbReference>
<dbReference type="PIR" id="A46039">
    <property type="entry name" value="A46039"/>
</dbReference>
<dbReference type="SMR" id="P15393"/>
<dbReference type="FunCoup" id="P15393">
    <property type="interactions" value="15"/>
</dbReference>
<dbReference type="BindingDB" id="P15393"/>
<dbReference type="ChEMBL" id="CHEMBL4970"/>
<dbReference type="DrugCentral" id="P15393"/>
<dbReference type="PhosphoSitePlus" id="P15393"/>
<dbReference type="PaxDb" id="10116-ENSRNOP00000035538"/>
<dbReference type="UCSC" id="RGD:2453">
    <property type="organism name" value="rat"/>
</dbReference>
<dbReference type="AGR" id="RGD:2453"/>
<dbReference type="RGD" id="2453">
    <property type="gene designation" value="Cyp11b1"/>
</dbReference>
<dbReference type="eggNOG" id="KOG0159">
    <property type="taxonomic scope" value="Eukaryota"/>
</dbReference>
<dbReference type="InParanoid" id="P15393"/>
<dbReference type="PhylomeDB" id="P15393"/>
<dbReference type="Reactome" id="R-RNO-194002">
    <property type="pathway name" value="Glucocorticoid biosynthesis"/>
</dbReference>
<dbReference type="Reactome" id="R-RNO-211976">
    <property type="pathway name" value="Endogenous sterols"/>
</dbReference>
<dbReference type="SABIO-RK" id="P15393"/>
<dbReference type="UniPathway" id="UPA00788"/>
<dbReference type="PRO" id="PR:P15393"/>
<dbReference type="Proteomes" id="UP000002494">
    <property type="component" value="Unplaced"/>
</dbReference>
<dbReference type="GO" id="GO:0005743">
    <property type="term" value="C:mitochondrial inner membrane"/>
    <property type="evidence" value="ECO:0000318"/>
    <property type="project" value="GO_Central"/>
</dbReference>
<dbReference type="GO" id="GO:0047783">
    <property type="term" value="F:corticosterone 18-monooxygenase activity"/>
    <property type="evidence" value="ECO:0000318"/>
    <property type="project" value="GO_Central"/>
</dbReference>
<dbReference type="GO" id="GO:0020037">
    <property type="term" value="F:heme binding"/>
    <property type="evidence" value="ECO:0007669"/>
    <property type="project" value="InterPro"/>
</dbReference>
<dbReference type="GO" id="GO:0005506">
    <property type="term" value="F:iron ion binding"/>
    <property type="evidence" value="ECO:0007669"/>
    <property type="project" value="InterPro"/>
</dbReference>
<dbReference type="GO" id="GO:0004507">
    <property type="term" value="F:steroid 11-beta-monooxygenase activity"/>
    <property type="evidence" value="ECO:0000314"/>
    <property type="project" value="RGD"/>
</dbReference>
<dbReference type="GO" id="GO:0005496">
    <property type="term" value="F:steroid binding"/>
    <property type="evidence" value="ECO:0000314"/>
    <property type="project" value="RGD"/>
</dbReference>
<dbReference type="GO" id="GO:0032342">
    <property type="term" value="P:aldosterone biosynthetic process"/>
    <property type="evidence" value="ECO:0000315"/>
    <property type="project" value="UniProtKB"/>
</dbReference>
<dbReference type="GO" id="GO:0071375">
    <property type="term" value="P:cellular response to peptide hormone stimulus"/>
    <property type="evidence" value="ECO:0000318"/>
    <property type="project" value="GO_Central"/>
</dbReference>
<dbReference type="GO" id="GO:0071346">
    <property type="term" value="P:cellular response to type II interferon"/>
    <property type="evidence" value="ECO:0000270"/>
    <property type="project" value="RGD"/>
</dbReference>
<dbReference type="GO" id="GO:0008203">
    <property type="term" value="P:cholesterol metabolic process"/>
    <property type="evidence" value="ECO:0000318"/>
    <property type="project" value="GO_Central"/>
</dbReference>
<dbReference type="GO" id="GO:0034651">
    <property type="term" value="P:cortisol biosynthetic process"/>
    <property type="evidence" value="ECO:0000315"/>
    <property type="project" value="UniProtKB"/>
</dbReference>
<dbReference type="GO" id="GO:0034650">
    <property type="term" value="P:cortisol metabolic process"/>
    <property type="evidence" value="ECO:0000318"/>
    <property type="project" value="GO_Central"/>
</dbReference>
<dbReference type="GO" id="GO:0018894">
    <property type="term" value="P:dibenzo-p-dioxin metabolic process"/>
    <property type="evidence" value="ECO:0000270"/>
    <property type="project" value="RGD"/>
</dbReference>
<dbReference type="GO" id="GO:0006704">
    <property type="term" value="P:glucocorticoid biosynthetic process"/>
    <property type="evidence" value="ECO:0000314"/>
    <property type="project" value="RGD"/>
</dbReference>
<dbReference type="GO" id="GO:0071548">
    <property type="term" value="P:response to dexamethasone"/>
    <property type="evidence" value="ECO:0000270"/>
    <property type="project" value="RGD"/>
</dbReference>
<dbReference type="GO" id="GO:0009410">
    <property type="term" value="P:response to xenobiotic stimulus"/>
    <property type="evidence" value="ECO:0000270"/>
    <property type="project" value="RGD"/>
</dbReference>
<dbReference type="GO" id="GO:0006694">
    <property type="term" value="P:steroid biosynthetic process"/>
    <property type="evidence" value="ECO:0000314"/>
    <property type="project" value="RGD"/>
</dbReference>
<dbReference type="GO" id="GO:0008202">
    <property type="term" value="P:steroid metabolic process"/>
    <property type="evidence" value="ECO:0000304"/>
    <property type="project" value="RGD"/>
</dbReference>
<dbReference type="FunFam" id="1.10.630.10:FF:000015">
    <property type="entry name" value="Cholesterol side-chain cleavage enzyme, mitochondrial"/>
    <property type="match status" value="1"/>
</dbReference>
<dbReference type="Gene3D" id="1.10.630.10">
    <property type="entry name" value="Cytochrome P450"/>
    <property type="match status" value="1"/>
</dbReference>
<dbReference type="InterPro" id="IPR050479">
    <property type="entry name" value="CYP11_CYP27_families"/>
</dbReference>
<dbReference type="InterPro" id="IPR001128">
    <property type="entry name" value="Cyt_P450"/>
</dbReference>
<dbReference type="InterPro" id="IPR017972">
    <property type="entry name" value="Cyt_P450_CS"/>
</dbReference>
<dbReference type="InterPro" id="IPR002399">
    <property type="entry name" value="Cyt_P450_mitochondrial"/>
</dbReference>
<dbReference type="InterPro" id="IPR036396">
    <property type="entry name" value="Cyt_P450_sf"/>
</dbReference>
<dbReference type="PANTHER" id="PTHR24279">
    <property type="entry name" value="CYTOCHROME P450"/>
    <property type="match status" value="1"/>
</dbReference>
<dbReference type="PANTHER" id="PTHR24279:SF116">
    <property type="entry name" value="STEROID 11BETA-MONOOXYGENASE"/>
    <property type="match status" value="1"/>
</dbReference>
<dbReference type="Pfam" id="PF00067">
    <property type="entry name" value="p450"/>
    <property type="match status" value="1"/>
</dbReference>
<dbReference type="PRINTS" id="PR00408">
    <property type="entry name" value="MITP450"/>
</dbReference>
<dbReference type="PRINTS" id="PR00385">
    <property type="entry name" value="P450"/>
</dbReference>
<dbReference type="SUPFAM" id="SSF48264">
    <property type="entry name" value="Cytochrome P450"/>
    <property type="match status" value="1"/>
</dbReference>
<dbReference type="PROSITE" id="PS00086">
    <property type="entry name" value="CYTOCHROME_P450"/>
    <property type="match status" value="1"/>
</dbReference>
<keyword id="KW-0903">Direct protein sequencing</keyword>
<keyword id="KW-0349">Heme</keyword>
<keyword id="KW-0408">Iron</keyword>
<keyword id="KW-0472">Membrane</keyword>
<keyword id="KW-0479">Metal-binding</keyword>
<keyword id="KW-0496">Mitochondrion</keyword>
<keyword id="KW-0999">Mitochondrion inner membrane</keyword>
<keyword id="KW-0503">Monooxygenase</keyword>
<keyword id="KW-0560">Oxidoreductase</keyword>
<keyword id="KW-1185">Reference proteome</keyword>
<keyword id="KW-0755">Steroidogenesis</keyword>
<keyword id="KW-0809">Transit peptide</keyword>
<sequence length="499" mass="57459">MALRVTADVWLARPWQCLHRTRALGTTAKVAPKTLKPFEAIPQYSRNKWLKMIQILREQGQENLHLEMHQAFQELGPIFRHSAGGAQIVSVMLPEDAEKLHQVESILPHRMPLEPWVAHRELRGLRRGVFLLNGADWRFNRLQLNPNMLSPKAIQSFVPFVDVVARDFVENLKKRMLENVHGSMSINIQSNMFNYTMEASHFVISGERLGLTGHDLKPESVTFTHALHSMFKSTTQLMFLPKSLTRWTSTRVWKEHFDSWDIISEYVTKCIKNVYRELAEGRQQSWSVISEMVAQSTLSMDAIHANSMELIAGSVDTTAISLVMTLFELARNPDVQQALRQESLAAEASIVANPQKAMSDLPLLRAALKETLRLYPVGSFVERIVHSDLVLQNYHVPAGTFVIIYLYSMGRNPAVFPRPERYMPQRWLERKRSFQHLAFGFGVRQCLGRRLAEVEMLLLLHHMLKTFQVETLRQEDMQMVFRFLLMPSSSPFLTFRPVS</sequence>
<proteinExistence type="evidence at protein level"/>
<protein>
    <recommendedName>
        <fullName>Cytochrome P450 11B1, mitochondrial</fullName>
    </recommendedName>
    <alternativeName>
        <fullName>CYPXIB1</fullName>
    </alternativeName>
    <alternativeName>
        <fullName>Cytochrome P450(11 beta)-DS</fullName>
    </alternativeName>
    <alternativeName>
        <fullName>Cytochrome P450C11</fullName>
    </alternativeName>
    <alternativeName>
        <fullName evidence="2">Steroid 11-beta-hydroxylase, CYP11B1</fullName>
        <ecNumber evidence="2">1.14.15.4</ecNumber>
    </alternativeName>
</protein>
<organism>
    <name type="scientific">Rattus norvegicus</name>
    <name type="common">Rat</name>
    <dbReference type="NCBI Taxonomy" id="10116"/>
    <lineage>
        <taxon>Eukaryota</taxon>
        <taxon>Metazoa</taxon>
        <taxon>Chordata</taxon>
        <taxon>Craniata</taxon>
        <taxon>Vertebrata</taxon>
        <taxon>Euteleostomi</taxon>
        <taxon>Mammalia</taxon>
        <taxon>Eutheria</taxon>
        <taxon>Euarchontoglires</taxon>
        <taxon>Glires</taxon>
        <taxon>Rodentia</taxon>
        <taxon>Myomorpha</taxon>
        <taxon>Muroidea</taxon>
        <taxon>Muridae</taxon>
        <taxon>Murinae</taxon>
        <taxon>Rattus</taxon>
    </lineage>
</organism>